<evidence type="ECO:0000255" key="1">
    <source>
        <dbReference type="HAMAP-Rule" id="MF_01585"/>
    </source>
</evidence>
<sequence length="398" mass="42913">MNASSVVQPLLTRGMKAVLVSQFFSAFADNALLFAILAQLKAQFYPDWSQPILQIVFVLAYILLAPFVGQIADRFPKDRVMLFANSFKLLGAFTICLGYDPFLGYALVGVGAASYSPAKYGILVELTDGDRLVKANGLMEASTIIAILTGSVVGGFLSDWNLAIALLVCALMYGIAVVANFFIPRLSAVRRDKGWNLKKMLTDFASACCILWHNKGARFSLIGTSLFWGAGITLRFLLVLWVPVVLGISDNSTPTILNVMVAVGIIIGAGAAARFITLKTVHRCMPAGVLIGVMVVIFAVQHSIWASYVLLIILGIFGGLFIVPLNALLQESGRQTIGVGYAIAVQNLGENIAMLLMLGLYSLVIKIGVPVVTTGIGFGTLLALTITSLWIWNRFQRN</sequence>
<accession>Q7N7A8</accession>
<organism>
    <name type="scientific">Photorhabdus laumondii subsp. laumondii (strain DSM 15139 / CIP 105565 / TT01)</name>
    <name type="common">Photorhabdus luminescens subsp. laumondii</name>
    <dbReference type="NCBI Taxonomy" id="243265"/>
    <lineage>
        <taxon>Bacteria</taxon>
        <taxon>Pseudomonadati</taxon>
        <taxon>Pseudomonadota</taxon>
        <taxon>Gammaproteobacteria</taxon>
        <taxon>Enterobacterales</taxon>
        <taxon>Morganellaceae</taxon>
        <taxon>Photorhabdus</taxon>
    </lineage>
</organism>
<protein>
    <recommendedName>
        <fullName evidence="1">Lysophospholipid transporter LplT</fullName>
    </recommendedName>
</protein>
<feature type="chain" id="PRO_0000309829" description="Lysophospholipid transporter LplT">
    <location>
        <begin position="1"/>
        <end position="398"/>
    </location>
</feature>
<feature type="transmembrane region" description="Helical" evidence="1">
    <location>
        <begin position="17"/>
        <end position="37"/>
    </location>
</feature>
<feature type="transmembrane region" description="Helical" evidence="1">
    <location>
        <begin position="52"/>
        <end position="72"/>
    </location>
</feature>
<feature type="transmembrane region" description="Helical" evidence="1">
    <location>
        <begin position="90"/>
        <end position="110"/>
    </location>
</feature>
<feature type="transmembrane region" description="Helical" evidence="1">
    <location>
        <begin position="137"/>
        <end position="157"/>
    </location>
</feature>
<feature type="transmembrane region" description="Helical" evidence="1">
    <location>
        <begin position="163"/>
        <end position="183"/>
    </location>
</feature>
<feature type="transmembrane region" description="Helical" evidence="1">
    <location>
        <begin position="226"/>
        <end position="246"/>
    </location>
</feature>
<feature type="transmembrane region" description="Helical" evidence="1">
    <location>
        <begin position="256"/>
        <end position="276"/>
    </location>
</feature>
<feature type="transmembrane region" description="Helical" evidence="1">
    <location>
        <begin position="285"/>
        <end position="305"/>
    </location>
</feature>
<feature type="transmembrane region" description="Helical" evidence="1">
    <location>
        <begin position="309"/>
        <end position="329"/>
    </location>
</feature>
<feature type="transmembrane region" description="Helical" evidence="1">
    <location>
        <begin position="352"/>
        <end position="372"/>
    </location>
</feature>
<feature type="transmembrane region" description="Helical" evidence="1">
    <location>
        <begin position="373"/>
        <end position="393"/>
    </location>
</feature>
<reference key="1">
    <citation type="journal article" date="2003" name="Nat. Biotechnol.">
        <title>The genome sequence of the entomopathogenic bacterium Photorhabdus luminescens.</title>
        <authorList>
            <person name="Duchaud E."/>
            <person name="Rusniok C."/>
            <person name="Frangeul L."/>
            <person name="Buchrieser C."/>
            <person name="Givaudan A."/>
            <person name="Taourit S."/>
            <person name="Bocs S."/>
            <person name="Boursaux-Eude C."/>
            <person name="Chandler M."/>
            <person name="Charles J.-F."/>
            <person name="Dassa E."/>
            <person name="Derose R."/>
            <person name="Derzelle S."/>
            <person name="Freyssinet G."/>
            <person name="Gaudriault S."/>
            <person name="Medigue C."/>
            <person name="Lanois A."/>
            <person name="Powell K."/>
            <person name="Siguier P."/>
            <person name="Vincent R."/>
            <person name="Wingate V."/>
            <person name="Zouine M."/>
            <person name="Glaser P."/>
            <person name="Boemare N."/>
            <person name="Danchin A."/>
            <person name="Kunst F."/>
        </authorList>
    </citation>
    <scope>NUCLEOTIDE SEQUENCE [LARGE SCALE GENOMIC DNA]</scope>
    <source>
        <strain>DSM 15139 / CIP 105565 / TT01</strain>
    </source>
</reference>
<dbReference type="EMBL" id="BX571863">
    <property type="protein sequence ID" value="CAE13541.1"/>
    <property type="molecule type" value="Genomic_DNA"/>
</dbReference>
<dbReference type="SMR" id="Q7N7A8"/>
<dbReference type="STRING" id="243265.plu1247"/>
<dbReference type="KEGG" id="plu:plu1247"/>
<dbReference type="eggNOG" id="COG2814">
    <property type="taxonomic scope" value="Bacteria"/>
</dbReference>
<dbReference type="HOGENOM" id="CLU_047399_0_0_6"/>
<dbReference type="Proteomes" id="UP000002514">
    <property type="component" value="Chromosome"/>
</dbReference>
<dbReference type="GO" id="GO:0005886">
    <property type="term" value="C:plasma membrane"/>
    <property type="evidence" value="ECO:0007669"/>
    <property type="project" value="UniProtKB-SubCell"/>
</dbReference>
<dbReference type="GO" id="GO:0051978">
    <property type="term" value="F:lysophospholipid:sodium symporter activity"/>
    <property type="evidence" value="ECO:0007669"/>
    <property type="project" value="InterPro"/>
</dbReference>
<dbReference type="CDD" id="cd06173">
    <property type="entry name" value="MFS_MefA_like"/>
    <property type="match status" value="1"/>
</dbReference>
<dbReference type="Gene3D" id="1.20.1250.20">
    <property type="entry name" value="MFS general substrate transporter like domains"/>
    <property type="match status" value="1"/>
</dbReference>
<dbReference type="HAMAP" id="MF_01585">
    <property type="entry name" value="MFS_LplT"/>
    <property type="match status" value="1"/>
</dbReference>
<dbReference type="InterPro" id="IPR023727">
    <property type="entry name" value="LysoPLipid__transptr_LplT"/>
</dbReference>
<dbReference type="InterPro" id="IPR011701">
    <property type="entry name" value="MFS"/>
</dbReference>
<dbReference type="InterPro" id="IPR036259">
    <property type="entry name" value="MFS_trans_sf"/>
</dbReference>
<dbReference type="NCBIfam" id="NF008397">
    <property type="entry name" value="PRK11195.1"/>
    <property type="match status" value="1"/>
</dbReference>
<dbReference type="PANTHER" id="PTHR43266">
    <property type="entry name" value="MACROLIDE-EFFLUX PROTEIN"/>
    <property type="match status" value="1"/>
</dbReference>
<dbReference type="PANTHER" id="PTHR43266:SF2">
    <property type="entry name" value="MAJOR FACILITATOR SUPERFAMILY (MFS) PROFILE DOMAIN-CONTAINING PROTEIN"/>
    <property type="match status" value="1"/>
</dbReference>
<dbReference type="Pfam" id="PF07690">
    <property type="entry name" value="MFS_1"/>
    <property type="match status" value="1"/>
</dbReference>
<dbReference type="SUPFAM" id="SSF103473">
    <property type="entry name" value="MFS general substrate transporter"/>
    <property type="match status" value="1"/>
</dbReference>
<proteinExistence type="inferred from homology"/>
<gene>
    <name evidence="1" type="primary">lplT</name>
    <name type="ordered locus">plu1247</name>
</gene>
<comment type="function">
    <text evidence="1">Catalyzes the facilitated diffusion of 2-acyl-glycero-3-phosphoethanolamine (2-acyl-GPE) into the cell.</text>
</comment>
<comment type="subcellular location">
    <subcellularLocation>
        <location evidence="1">Cell inner membrane</location>
        <topology evidence="1">Multi-pass membrane protein</topology>
    </subcellularLocation>
</comment>
<comment type="similarity">
    <text evidence="1">Belongs to the major facilitator superfamily. LplT (TC 2.A.1.42) family.</text>
</comment>
<name>LPLT_PHOLL</name>
<keyword id="KW-0997">Cell inner membrane</keyword>
<keyword id="KW-1003">Cell membrane</keyword>
<keyword id="KW-0445">Lipid transport</keyword>
<keyword id="KW-0472">Membrane</keyword>
<keyword id="KW-1185">Reference proteome</keyword>
<keyword id="KW-0812">Transmembrane</keyword>
<keyword id="KW-1133">Transmembrane helix</keyword>
<keyword id="KW-0813">Transport</keyword>